<accession>Q5FIR6</accession>
<feature type="chain" id="PRO_0000109976" description="UPF0342 protein LBA1592">
    <location>
        <begin position="1"/>
        <end position="116"/>
    </location>
</feature>
<keyword id="KW-1185">Reference proteome</keyword>
<comment type="similarity">
    <text evidence="1">Belongs to the UPF0342 family.</text>
</comment>
<organism>
    <name type="scientific">Lactobacillus acidophilus (strain ATCC 700396 / NCK56 / N2 / NCFM)</name>
    <dbReference type="NCBI Taxonomy" id="272621"/>
    <lineage>
        <taxon>Bacteria</taxon>
        <taxon>Bacillati</taxon>
        <taxon>Bacillota</taxon>
        <taxon>Bacilli</taxon>
        <taxon>Lactobacillales</taxon>
        <taxon>Lactobacillaceae</taxon>
        <taxon>Lactobacillus</taxon>
    </lineage>
</organism>
<dbReference type="EMBL" id="CP000033">
    <property type="protein sequence ID" value="AAV43408.1"/>
    <property type="molecule type" value="Genomic_DNA"/>
</dbReference>
<dbReference type="RefSeq" id="WP_003548438.1">
    <property type="nucleotide sequence ID" value="NC_006814.3"/>
</dbReference>
<dbReference type="RefSeq" id="YP_194439.1">
    <property type="nucleotide sequence ID" value="NC_006814.3"/>
</dbReference>
<dbReference type="SMR" id="Q5FIR6"/>
<dbReference type="STRING" id="272621.LBA1592"/>
<dbReference type="KEGG" id="lac:LBA1592"/>
<dbReference type="PATRIC" id="fig|272621.13.peg.1513"/>
<dbReference type="eggNOG" id="COG3679">
    <property type="taxonomic scope" value="Bacteria"/>
</dbReference>
<dbReference type="HOGENOM" id="CLU_140243_3_1_9"/>
<dbReference type="OrthoDB" id="9811402at2"/>
<dbReference type="BioCyc" id="LACI272621:G1G49-1555-MONOMER"/>
<dbReference type="Proteomes" id="UP000006381">
    <property type="component" value="Chromosome"/>
</dbReference>
<dbReference type="Gene3D" id="1.20.1500.10">
    <property type="entry name" value="YheA/YmcA-like"/>
    <property type="match status" value="1"/>
</dbReference>
<dbReference type="HAMAP" id="MF_01526">
    <property type="entry name" value="UPF0342"/>
    <property type="match status" value="1"/>
</dbReference>
<dbReference type="InterPro" id="IPR010368">
    <property type="entry name" value="Com_YlbF"/>
</dbReference>
<dbReference type="InterPro" id="IPR023378">
    <property type="entry name" value="YheA/YmcA-like_dom_sf"/>
</dbReference>
<dbReference type="Pfam" id="PF06133">
    <property type="entry name" value="Com_YlbF"/>
    <property type="match status" value="1"/>
</dbReference>
<dbReference type="SUPFAM" id="SSF158622">
    <property type="entry name" value="YheA/YmcA-like"/>
    <property type="match status" value="1"/>
</dbReference>
<name>Y1592_LACAC</name>
<gene>
    <name type="ordered locus">LBA1592</name>
</gene>
<evidence type="ECO:0000255" key="1">
    <source>
        <dbReference type="HAMAP-Rule" id="MF_01526"/>
    </source>
</evidence>
<reference key="1">
    <citation type="journal article" date="2005" name="Proc. Natl. Acad. Sci. U.S.A.">
        <title>Complete genome sequence of the probiotic lactic acid bacterium Lactobacillus acidophilus NCFM.</title>
        <authorList>
            <person name="Altermann E."/>
            <person name="Russell W.M."/>
            <person name="Azcarate-Peril M.A."/>
            <person name="Barrangou R."/>
            <person name="Buck B.L."/>
            <person name="McAuliffe O."/>
            <person name="Souther N."/>
            <person name="Dobson A."/>
            <person name="Duong T."/>
            <person name="Callanan M."/>
            <person name="Lick S."/>
            <person name="Hamrick A."/>
            <person name="Cano R."/>
            <person name="Klaenhammer T.R."/>
        </authorList>
    </citation>
    <scope>NUCLEOTIDE SEQUENCE [LARGE SCALE GENOMIC DNA]</scope>
    <source>
        <strain>ATCC 700396 / NCK56 / N2 / NCFM</strain>
    </source>
</reference>
<proteinExistence type="inferred from homology"/>
<sequence>MINIYDSANKLAEDLTQTDQYKALADAVKVVQEDAESAALFKKMDELQTKIMQSQQTGQPLSEEDQQAYKDLNDQVQNNKQIVSLLQTEQSLYELLNDIQKTYSKPINDLYEDLRK</sequence>
<protein>
    <recommendedName>
        <fullName evidence="1">UPF0342 protein LBA1592</fullName>
    </recommendedName>
</protein>